<protein>
    <recommendedName>
        <fullName evidence="1">Phosphopantetheine adenylyltransferase</fullName>
        <ecNumber evidence="1">2.7.7.3</ecNumber>
    </recommendedName>
    <alternativeName>
        <fullName evidence="1">Dephospho-CoA pyrophosphorylase</fullName>
    </alternativeName>
    <alternativeName>
        <fullName evidence="1">Pantetheine-phosphate adenylyltransferase</fullName>
        <shortName evidence="1">PPAT</shortName>
    </alternativeName>
</protein>
<feature type="chain" id="PRO_1000096805" description="Phosphopantetheine adenylyltransferase">
    <location>
        <begin position="1"/>
        <end position="156"/>
    </location>
</feature>
<feature type="binding site" evidence="1">
    <location>
        <begin position="9"/>
        <end position="10"/>
    </location>
    <ligand>
        <name>ATP</name>
        <dbReference type="ChEBI" id="CHEBI:30616"/>
    </ligand>
</feature>
<feature type="binding site" evidence="1">
    <location>
        <position position="9"/>
    </location>
    <ligand>
        <name>substrate</name>
    </ligand>
</feature>
<feature type="binding site" evidence="1">
    <location>
        <position position="17"/>
    </location>
    <ligand>
        <name>ATP</name>
        <dbReference type="ChEBI" id="CHEBI:30616"/>
    </ligand>
</feature>
<feature type="binding site" evidence="1">
    <location>
        <position position="41"/>
    </location>
    <ligand>
        <name>substrate</name>
    </ligand>
</feature>
<feature type="binding site" evidence="1">
    <location>
        <position position="74"/>
    </location>
    <ligand>
        <name>substrate</name>
    </ligand>
</feature>
<feature type="binding site" evidence="1">
    <location>
        <position position="88"/>
    </location>
    <ligand>
        <name>substrate</name>
    </ligand>
</feature>
<feature type="binding site" evidence="1">
    <location>
        <begin position="89"/>
        <end position="91"/>
    </location>
    <ligand>
        <name>ATP</name>
        <dbReference type="ChEBI" id="CHEBI:30616"/>
    </ligand>
</feature>
<feature type="binding site" evidence="1">
    <location>
        <position position="99"/>
    </location>
    <ligand>
        <name>ATP</name>
        <dbReference type="ChEBI" id="CHEBI:30616"/>
    </ligand>
</feature>
<feature type="binding site" evidence="1">
    <location>
        <begin position="123"/>
        <end position="129"/>
    </location>
    <ligand>
        <name>ATP</name>
        <dbReference type="ChEBI" id="CHEBI:30616"/>
    </ligand>
</feature>
<feature type="site" description="Transition state stabilizer" evidence="1">
    <location>
        <position position="17"/>
    </location>
</feature>
<name>COAD_KOCRD</name>
<proteinExistence type="inferred from homology"/>
<gene>
    <name evidence="1" type="primary">coaD</name>
    <name type="ordered locus">KRH_10440</name>
</gene>
<dbReference type="EC" id="2.7.7.3" evidence="1"/>
<dbReference type="EMBL" id="AP009152">
    <property type="protein sequence ID" value="BAG29391.1"/>
    <property type="molecule type" value="Genomic_DNA"/>
</dbReference>
<dbReference type="RefSeq" id="WP_012398112.1">
    <property type="nucleotide sequence ID" value="NC_010617.1"/>
</dbReference>
<dbReference type="SMR" id="B2GFL8"/>
<dbReference type="STRING" id="378753.KRH_10440"/>
<dbReference type="KEGG" id="krh:KRH_10440"/>
<dbReference type="eggNOG" id="COG0669">
    <property type="taxonomic scope" value="Bacteria"/>
</dbReference>
<dbReference type="HOGENOM" id="CLU_100149_1_0_11"/>
<dbReference type="OrthoDB" id="9806661at2"/>
<dbReference type="UniPathway" id="UPA00241">
    <property type="reaction ID" value="UER00355"/>
</dbReference>
<dbReference type="Proteomes" id="UP000008838">
    <property type="component" value="Chromosome"/>
</dbReference>
<dbReference type="GO" id="GO:0005737">
    <property type="term" value="C:cytoplasm"/>
    <property type="evidence" value="ECO:0007669"/>
    <property type="project" value="UniProtKB-SubCell"/>
</dbReference>
<dbReference type="GO" id="GO:0005524">
    <property type="term" value="F:ATP binding"/>
    <property type="evidence" value="ECO:0007669"/>
    <property type="project" value="UniProtKB-KW"/>
</dbReference>
<dbReference type="GO" id="GO:0004595">
    <property type="term" value="F:pantetheine-phosphate adenylyltransferase activity"/>
    <property type="evidence" value="ECO:0007669"/>
    <property type="project" value="UniProtKB-UniRule"/>
</dbReference>
<dbReference type="GO" id="GO:0015937">
    <property type="term" value="P:coenzyme A biosynthetic process"/>
    <property type="evidence" value="ECO:0007669"/>
    <property type="project" value="UniProtKB-UniRule"/>
</dbReference>
<dbReference type="CDD" id="cd02163">
    <property type="entry name" value="PPAT"/>
    <property type="match status" value="1"/>
</dbReference>
<dbReference type="Gene3D" id="3.40.50.620">
    <property type="entry name" value="HUPs"/>
    <property type="match status" value="1"/>
</dbReference>
<dbReference type="HAMAP" id="MF_00151">
    <property type="entry name" value="PPAT_bact"/>
    <property type="match status" value="1"/>
</dbReference>
<dbReference type="InterPro" id="IPR004821">
    <property type="entry name" value="Cyt_trans-like"/>
</dbReference>
<dbReference type="InterPro" id="IPR001980">
    <property type="entry name" value="PPAT"/>
</dbReference>
<dbReference type="InterPro" id="IPR014729">
    <property type="entry name" value="Rossmann-like_a/b/a_fold"/>
</dbReference>
<dbReference type="NCBIfam" id="TIGR01510">
    <property type="entry name" value="coaD_prev_kdtB"/>
    <property type="match status" value="1"/>
</dbReference>
<dbReference type="NCBIfam" id="TIGR00125">
    <property type="entry name" value="cyt_tran_rel"/>
    <property type="match status" value="1"/>
</dbReference>
<dbReference type="PANTHER" id="PTHR21342">
    <property type="entry name" value="PHOSPHOPANTETHEINE ADENYLYLTRANSFERASE"/>
    <property type="match status" value="1"/>
</dbReference>
<dbReference type="PANTHER" id="PTHR21342:SF1">
    <property type="entry name" value="PHOSPHOPANTETHEINE ADENYLYLTRANSFERASE"/>
    <property type="match status" value="1"/>
</dbReference>
<dbReference type="Pfam" id="PF01467">
    <property type="entry name" value="CTP_transf_like"/>
    <property type="match status" value="1"/>
</dbReference>
<dbReference type="PRINTS" id="PR01020">
    <property type="entry name" value="LPSBIOSNTHSS"/>
</dbReference>
<dbReference type="SUPFAM" id="SSF52374">
    <property type="entry name" value="Nucleotidylyl transferase"/>
    <property type="match status" value="1"/>
</dbReference>
<comment type="function">
    <text evidence="1">Reversibly transfers an adenylyl group from ATP to 4'-phosphopantetheine, yielding dephospho-CoA (dPCoA) and pyrophosphate.</text>
</comment>
<comment type="catalytic activity">
    <reaction evidence="1">
        <text>(R)-4'-phosphopantetheine + ATP + H(+) = 3'-dephospho-CoA + diphosphate</text>
        <dbReference type="Rhea" id="RHEA:19801"/>
        <dbReference type="ChEBI" id="CHEBI:15378"/>
        <dbReference type="ChEBI" id="CHEBI:30616"/>
        <dbReference type="ChEBI" id="CHEBI:33019"/>
        <dbReference type="ChEBI" id="CHEBI:57328"/>
        <dbReference type="ChEBI" id="CHEBI:61723"/>
        <dbReference type="EC" id="2.7.7.3"/>
    </reaction>
</comment>
<comment type="cofactor">
    <cofactor evidence="1">
        <name>Mg(2+)</name>
        <dbReference type="ChEBI" id="CHEBI:18420"/>
    </cofactor>
</comment>
<comment type="pathway">
    <text evidence="1">Cofactor biosynthesis; coenzyme A biosynthesis; CoA from (R)-pantothenate: step 4/5.</text>
</comment>
<comment type="subunit">
    <text evidence="1">Homohexamer.</text>
</comment>
<comment type="subcellular location">
    <subcellularLocation>
        <location evidence="1">Cytoplasm</location>
    </subcellularLocation>
</comment>
<comment type="similarity">
    <text evidence="1">Belongs to the bacterial CoaD family.</text>
</comment>
<evidence type="ECO:0000255" key="1">
    <source>
        <dbReference type="HAMAP-Rule" id="MF_00151"/>
    </source>
</evidence>
<reference key="1">
    <citation type="journal article" date="2008" name="J. Bacteriol.">
        <title>Complete genome sequence of the soil actinomycete Kocuria rhizophila.</title>
        <authorList>
            <person name="Takarada H."/>
            <person name="Sekine M."/>
            <person name="Kosugi H."/>
            <person name="Matsuo Y."/>
            <person name="Fujisawa T."/>
            <person name="Omata S."/>
            <person name="Kishi E."/>
            <person name="Shimizu A."/>
            <person name="Tsukatani N."/>
            <person name="Tanikawa S."/>
            <person name="Fujita N."/>
            <person name="Harayama S."/>
        </authorList>
    </citation>
    <scope>NUCLEOTIDE SEQUENCE [LARGE SCALE GENOMIC DNA]</scope>
    <source>
        <strain>ATCC 9341 / DSM 348 / NBRC 103217 / DC2201</strain>
    </source>
</reference>
<sequence length="156" mass="16958">MRRAICPGSFDPLHLGHCAVIRRATLLFDEVVVAVSTNPNKTHRFSEAQRIELVREVFADDPAVVVEPLESGLIADYAERRGAVALVKGLRNGADYDYELPMATMNRSLTGVETVFLPGEPSLLHVSSSLVMEVAALGGDVTSFVPPEVLRALEDE</sequence>
<accession>B2GFL8</accession>
<organism>
    <name type="scientific">Kocuria rhizophila (strain ATCC 9341 / DSM 348 / NBRC 103217 / DC2201)</name>
    <dbReference type="NCBI Taxonomy" id="378753"/>
    <lineage>
        <taxon>Bacteria</taxon>
        <taxon>Bacillati</taxon>
        <taxon>Actinomycetota</taxon>
        <taxon>Actinomycetes</taxon>
        <taxon>Micrococcales</taxon>
        <taxon>Micrococcaceae</taxon>
        <taxon>Kocuria</taxon>
    </lineage>
</organism>
<keyword id="KW-0067">ATP-binding</keyword>
<keyword id="KW-0173">Coenzyme A biosynthesis</keyword>
<keyword id="KW-0963">Cytoplasm</keyword>
<keyword id="KW-0460">Magnesium</keyword>
<keyword id="KW-0547">Nucleotide-binding</keyword>
<keyword id="KW-0548">Nucleotidyltransferase</keyword>
<keyword id="KW-1185">Reference proteome</keyword>
<keyword id="KW-0808">Transferase</keyword>